<sequence>MGRVTAPAPLEIEKTESAEEVFAVPEPDVPWVTIVHNDPVNLMSYVTYVFQTYFGYSKDKATKLMLDVHHKGRAVVSSGTREEMERDVQAMHGYGLWATLQQDRK</sequence>
<comment type="function">
    <text evidence="1">Involved in the modulation of the specificity of the ClpAP-mediated ATP-dependent protein degradation.</text>
</comment>
<comment type="subunit">
    <text evidence="1">Binds to the N-terminal domain of the chaperone ClpA.</text>
</comment>
<comment type="similarity">
    <text evidence="1">Belongs to the ClpS family.</text>
</comment>
<evidence type="ECO:0000255" key="1">
    <source>
        <dbReference type="HAMAP-Rule" id="MF_00302"/>
    </source>
</evidence>
<dbReference type="EMBL" id="BA000030">
    <property type="protein sequence ID" value="BAC72871.1"/>
    <property type="molecule type" value="Genomic_DNA"/>
</dbReference>
<dbReference type="RefSeq" id="WP_010986563.1">
    <property type="nucleotide sequence ID" value="NZ_JZJK01000072.1"/>
</dbReference>
<dbReference type="SMR" id="Q82D28"/>
<dbReference type="GeneID" id="41542245"/>
<dbReference type="KEGG" id="sma:SAVERM_5159"/>
<dbReference type="eggNOG" id="COG2127">
    <property type="taxonomic scope" value="Bacteria"/>
</dbReference>
<dbReference type="HOGENOM" id="CLU_153743_1_0_11"/>
<dbReference type="OrthoDB" id="162238at2"/>
<dbReference type="Proteomes" id="UP000000428">
    <property type="component" value="Chromosome"/>
</dbReference>
<dbReference type="GO" id="GO:0030163">
    <property type="term" value="P:protein catabolic process"/>
    <property type="evidence" value="ECO:0007669"/>
    <property type="project" value="InterPro"/>
</dbReference>
<dbReference type="GO" id="GO:0006508">
    <property type="term" value="P:proteolysis"/>
    <property type="evidence" value="ECO:0007669"/>
    <property type="project" value="UniProtKB-UniRule"/>
</dbReference>
<dbReference type="FunFam" id="3.30.1390.10:FF:000004">
    <property type="entry name" value="ATP-dependent Clp protease adapter protein ClpS"/>
    <property type="match status" value="1"/>
</dbReference>
<dbReference type="Gene3D" id="3.30.1390.10">
    <property type="match status" value="1"/>
</dbReference>
<dbReference type="HAMAP" id="MF_00302">
    <property type="entry name" value="ClpS"/>
    <property type="match status" value="1"/>
</dbReference>
<dbReference type="InterPro" id="IPR022935">
    <property type="entry name" value="ClpS"/>
</dbReference>
<dbReference type="InterPro" id="IPR003769">
    <property type="entry name" value="ClpS_core"/>
</dbReference>
<dbReference type="InterPro" id="IPR014719">
    <property type="entry name" value="Ribosomal_bL12_C/ClpS-like"/>
</dbReference>
<dbReference type="NCBIfam" id="NF000668">
    <property type="entry name" value="PRK00033.1-1"/>
    <property type="match status" value="1"/>
</dbReference>
<dbReference type="PANTHER" id="PTHR33473:SF19">
    <property type="entry name" value="ATP-DEPENDENT CLP PROTEASE ADAPTER PROTEIN CLPS"/>
    <property type="match status" value="1"/>
</dbReference>
<dbReference type="PANTHER" id="PTHR33473">
    <property type="entry name" value="ATP-DEPENDENT CLP PROTEASE ADAPTER PROTEIN CLPS1, CHLOROPLASTIC"/>
    <property type="match status" value="1"/>
</dbReference>
<dbReference type="Pfam" id="PF02617">
    <property type="entry name" value="ClpS"/>
    <property type="match status" value="1"/>
</dbReference>
<dbReference type="SUPFAM" id="SSF54736">
    <property type="entry name" value="ClpS-like"/>
    <property type="match status" value="1"/>
</dbReference>
<protein>
    <recommendedName>
        <fullName evidence="1">ATP-dependent Clp protease adapter protein ClpS</fullName>
    </recommendedName>
</protein>
<reference key="1">
    <citation type="journal article" date="2001" name="Proc. Natl. Acad. Sci. U.S.A.">
        <title>Genome sequence of an industrial microorganism Streptomyces avermitilis: deducing the ability of producing secondary metabolites.</title>
        <authorList>
            <person name="Omura S."/>
            <person name="Ikeda H."/>
            <person name="Ishikawa J."/>
            <person name="Hanamoto A."/>
            <person name="Takahashi C."/>
            <person name="Shinose M."/>
            <person name="Takahashi Y."/>
            <person name="Horikawa H."/>
            <person name="Nakazawa H."/>
            <person name="Osonoe T."/>
            <person name="Kikuchi H."/>
            <person name="Shiba T."/>
            <person name="Sakaki Y."/>
            <person name="Hattori M."/>
        </authorList>
    </citation>
    <scope>NUCLEOTIDE SEQUENCE [LARGE SCALE GENOMIC DNA]</scope>
    <source>
        <strain>ATCC 31267 / DSM 46492 / JCM 5070 / NBRC 14893 / NCIMB 12804 / NRRL 8165 / MA-4680</strain>
    </source>
</reference>
<reference key="2">
    <citation type="journal article" date="2003" name="Nat. Biotechnol.">
        <title>Complete genome sequence and comparative analysis of the industrial microorganism Streptomyces avermitilis.</title>
        <authorList>
            <person name="Ikeda H."/>
            <person name="Ishikawa J."/>
            <person name="Hanamoto A."/>
            <person name="Shinose M."/>
            <person name="Kikuchi H."/>
            <person name="Shiba T."/>
            <person name="Sakaki Y."/>
            <person name="Hattori M."/>
            <person name="Omura S."/>
        </authorList>
    </citation>
    <scope>NUCLEOTIDE SEQUENCE [LARGE SCALE GENOMIC DNA]</scope>
    <source>
        <strain>ATCC 31267 / DSM 46492 / JCM 5070 / NBRC 14893 / NCIMB 12804 / NRRL 8165 / MA-4680</strain>
    </source>
</reference>
<organism>
    <name type="scientific">Streptomyces avermitilis (strain ATCC 31267 / DSM 46492 / JCM 5070 / NBRC 14893 / NCIMB 12804 / NRRL 8165 / MA-4680)</name>
    <dbReference type="NCBI Taxonomy" id="227882"/>
    <lineage>
        <taxon>Bacteria</taxon>
        <taxon>Bacillati</taxon>
        <taxon>Actinomycetota</taxon>
        <taxon>Actinomycetes</taxon>
        <taxon>Kitasatosporales</taxon>
        <taxon>Streptomycetaceae</taxon>
        <taxon>Streptomyces</taxon>
    </lineage>
</organism>
<feature type="chain" id="PRO_0000215751" description="ATP-dependent Clp protease adapter protein ClpS">
    <location>
        <begin position="1"/>
        <end position="105"/>
    </location>
</feature>
<proteinExistence type="inferred from homology"/>
<accession>Q82D28</accession>
<gene>
    <name evidence="1" type="primary">clpS</name>
    <name type="ordered locus">SAV_5159</name>
</gene>
<keyword id="KW-1185">Reference proteome</keyword>
<name>CLPS_STRAW</name>